<gene>
    <name evidence="1" type="primary">Actl6b</name>
</gene>
<proteinExistence type="evidence at protein level"/>
<protein>
    <recommendedName>
        <fullName evidence="1">Actin-like protein 6B</fullName>
    </recommendedName>
    <alternativeName>
        <fullName>BRG1-associated factor 53B</fullName>
        <shortName>BAF53B</shortName>
    </alternativeName>
</protein>
<sequence length="426" mass="46891">MSGGVYGGDEVGALVFDIGSFSVRAGYAGEDCPKADFPTTVGLLAAEEGGGLELEGEKEKKGKIFHIDTNALHVPRDGAEVMSPLKNGMIEDWECFRAILDHTYSKHVKSEPNLHPVLMSEAPWNTRAKREKLTELMFEQYNIPAFFLCKTAVLTAFANGRSTGLVLDSGATHTTAIPVHDGYVLQQGIVKSPLAGDFISMQCRELFQEMAIDIIPPYMIAAKEPVREGAPPNWKKKEKLPQVSKSWHNYMCNEVIQDFQASVLQVSDSPYDEQVAAQMPTVHYEMPNGYNTDYGAERLRIPEGLFDPSNVKGLSGNTMLGVGHVVTTSIGMCDIDIRPGLYGSVIVTGGNTLLQGFTDRLNRELSQKTPPSMRLKLIASNSTMERKFSPWIGGSILASLGTFQQMWISKQEYEEGGKQCVERKCP</sequence>
<keyword id="KW-0156">Chromatin regulator</keyword>
<keyword id="KW-0524">Neurogenesis</keyword>
<keyword id="KW-0539">Nucleus</keyword>
<keyword id="KW-1185">Reference proteome</keyword>
<keyword id="KW-0804">Transcription</keyword>
<keyword id="KW-0805">Transcription regulation</keyword>
<feature type="chain" id="PRO_0000365478" description="Actin-like protein 6B">
    <location>
        <begin position="1"/>
        <end position="426"/>
    </location>
</feature>
<feature type="region of interest" description="Essential for mediating its function in dendritic development; may contribute to neuronal-specific targeting" evidence="2">
    <location>
        <begin position="39"/>
        <end position="82"/>
    </location>
</feature>
<organism>
    <name type="scientific">Rattus norvegicus</name>
    <name type="common">Rat</name>
    <dbReference type="NCBI Taxonomy" id="10116"/>
    <lineage>
        <taxon>Eukaryota</taxon>
        <taxon>Metazoa</taxon>
        <taxon>Chordata</taxon>
        <taxon>Craniata</taxon>
        <taxon>Vertebrata</taxon>
        <taxon>Euteleostomi</taxon>
        <taxon>Mammalia</taxon>
        <taxon>Eutheria</taxon>
        <taxon>Euarchontoglires</taxon>
        <taxon>Glires</taxon>
        <taxon>Rodentia</taxon>
        <taxon>Myomorpha</taxon>
        <taxon>Muroidea</taxon>
        <taxon>Muridae</taxon>
        <taxon>Murinae</taxon>
        <taxon>Rattus</taxon>
    </lineage>
</organism>
<evidence type="ECO:0000250" key="1">
    <source>
        <dbReference type="UniProtKB" id="O94805"/>
    </source>
</evidence>
<evidence type="ECO:0000250" key="2">
    <source>
        <dbReference type="UniProtKB" id="Q99MR0"/>
    </source>
</evidence>
<evidence type="ECO:0000255" key="3"/>
<evidence type="ECO:0000269" key="4">
    <source>
    </source>
</evidence>
<evidence type="ECO:0000305" key="5"/>
<accession>P86173</accession>
<accession>A6J021</accession>
<name>ACL6B_RAT</name>
<dbReference type="EMBL" id="CH473973">
    <property type="protein sequence ID" value="EDM13260.1"/>
    <property type="molecule type" value="Genomic_DNA"/>
</dbReference>
<dbReference type="RefSeq" id="NP_001099387.2">
    <property type="nucleotide sequence ID" value="NM_001105917.1"/>
</dbReference>
<dbReference type="SMR" id="P86173"/>
<dbReference type="FunCoup" id="P86173">
    <property type="interactions" value="1191"/>
</dbReference>
<dbReference type="STRING" id="10116.ENSRNOP00000001910"/>
<dbReference type="iPTMnet" id="P86173"/>
<dbReference type="PhosphoSitePlus" id="P86173"/>
<dbReference type="jPOST" id="P86173"/>
<dbReference type="PaxDb" id="10116-ENSRNOP00000001910"/>
<dbReference type="ABCD" id="P86173">
    <property type="antibodies" value="1 sequenced antibody"/>
</dbReference>
<dbReference type="GeneID" id="288563"/>
<dbReference type="KEGG" id="rno:288563"/>
<dbReference type="UCSC" id="RGD:1307763">
    <property type="organism name" value="rat"/>
</dbReference>
<dbReference type="AGR" id="RGD:1307763"/>
<dbReference type="CTD" id="51412"/>
<dbReference type="RGD" id="1307763">
    <property type="gene designation" value="Actl6b"/>
</dbReference>
<dbReference type="VEuPathDB" id="HostDB:ENSRNOG00000001408"/>
<dbReference type="eggNOG" id="KOG0679">
    <property type="taxonomic scope" value="Eukaryota"/>
</dbReference>
<dbReference type="InParanoid" id="P86173"/>
<dbReference type="OrthoDB" id="5132116at2759"/>
<dbReference type="PhylomeDB" id="P86173"/>
<dbReference type="TreeFam" id="TF312863"/>
<dbReference type="Reactome" id="R-RNO-3214858">
    <property type="pathway name" value="RMTs methylate histone arginines"/>
</dbReference>
<dbReference type="Reactome" id="R-RNO-8939243">
    <property type="pathway name" value="RUNX1 interacts with co-factors whose precise effect on RUNX1 targets is not known"/>
</dbReference>
<dbReference type="PRO" id="PR:P86173"/>
<dbReference type="Proteomes" id="UP000002494">
    <property type="component" value="Chromosome 12"/>
</dbReference>
<dbReference type="Proteomes" id="UP000234681">
    <property type="component" value="Chromosome 12"/>
</dbReference>
<dbReference type="Bgee" id="ENSRNOG00000001408">
    <property type="expression patterns" value="Expressed in frontal cortex and 4 other cell types or tissues"/>
</dbReference>
<dbReference type="ExpressionAtlas" id="P86173">
    <property type="expression patterns" value="baseline and differential"/>
</dbReference>
<dbReference type="GO" id="GO:0071565">
    <property type="term" value="C:nBAF complex"/>
    <property type="evidence" value="ECO:0000250"/>
    <property type="project" value="UniProtKB"/>
</dbReference>
<dbReference type="GO" id="GO:0035267">
    <property type="term" value="C:NuA4 histone acetyltransferase complex"/>
    <property type="evidence" value="ECO:0000318"/>
    <property type="project" value="GO_Central"/>
</dbReference>
<dbReference type="GO" id="GO:0005634">
    <property type="term" value="C:nucleus"/>
    <property type="evidence" value="ECO:0000314"/>
    <property type="project" value="MGI"/>
</dbReference>
<dbReference type="GO" id="GO:0016514">
    <property type="term" value="C:SWI/SNF complex"/>
    <property type="evidence" value="ECO:0000266"/>
    <property type="project" value="RGD"/>
</dbReference>
<dbReference type="GO" id="GO:0003682">
    <property type="term" value="F:chromatin binding"/>
    <property type="evidence" value="ECO:0000318"/>
    <property type="project" value="GO_Central"/>
</dbReference>
<dbReference type="GO" id="GO:0006338">
    <property type="term" value="P:chromatin remodeling"/>
    <property type="evidence" value="ECO:0000266"/>
    <property type="project" value="RGD"/>
</dbReference>
<dbReference type="GO" id="GO:0016358">
    <property type="term" value="P:dendrite development"/>
    <property type="evidence" value="ECO:0000250"/>
    <property type="project" value="UniProtKB"/>
</dbReference>
<dbReference type="GO" id="GO:0007399">
    <property type="term" value="P:nervous system development"/>
    <property type="evidence" value="ECO:0000266"/>
    <property type="project" value="RGD"/>
</dbReference>
<dbReference type="GO" id="GO:0042551">
    <property type="term" value="P:neuron maturation"/>
    <property type="evidence" value="ECO:0000250"/>
    <property type="project" value="UniProtKB"/>
</dbReference>
<dbReference type="GO" id="GO:0006357">
    <property type="term" value="P:regulation of transcription by RNA polymerase II"/>
    <property type="evidence" value="ECO:0000318"/>
    <property type="project" value="GO_Central"/>
</dbReference>
<dbReference type="GO" id="GO:0021510">
    <property type="term" value="P:spinal cord development"/>
    <property type="evidence" value="ECO:0000270"/>
    <property type="project" value="RGD"/>
</dbReference>
<dbReference type="CDD" id="cd13395">
    <property type="entry name" value="ASKHA_NBD_Arp4_ACTL6-like"/>
    <property type="match status" value="1"/>
</dbReference>
<dbReference type="FunFam" id="3.30.420.40:FF:000796">
    <property type="entry name" value="Actin like 6B"/>
    <property type="match status" value="1"/>
</dbReference>
<dbReference type="FunFam" id="3.90.640.10:FF:000009">
    <property type="entry name" value="Actin-like 6A, isoform CRA_a"/>
    <property type="match status" value="1"/>
</dbReference>
<dbReference type="FunFam" id="2.30.36.70:FF:000005">
    <property type="entry name" value="Actin-like protein 6B"/>
    <property type="match status" value="1"/>
</dbReference>
<dbReference type="FunFam" id="3.30.420.40:FF:000375">
    <property type="entry name" value="Actin-related protein 8"/>
    <property type="match status" value="1"/>
</dbReference>
<dbReference type="FunFam" id="3.30.420.40:FF:000058">
    <property type="entry name" value="Putative actin-related protein 5"/>
    <property type="match status" value="1"/>
</dbReference>
<dbReference type="Gene3D" id="3.30.420.40">
    <property type="match status" value="2"/>
</dbReference>
<dbReference type="Gene3D" id="2.30.36.70">
    <property type="entry name" value="Actin, Chain A, domain 2"/>
    <property type="match status" value="1"/>
</dbReference>
<dbReference type="Gene3D" id="3.90.640.10">
    <property type="entry name" value="Actin, Chain A, domain 4"/>
    <property type="match status" value="1"/>
</dbReference>
<dbReference type="InterPro" id="IPR004000">
    <property type="entry name" value="Actin"/>
</dbReference>
<dbReference type="InterPro" id="IPR004001">
    <property type="entry name" value="Actin_CS"/>
</dbReference>
<dbReference type="InterPro" id="IPR043129">
    <property type="entry name" value="ATPase_NBD"/>
</dbReference>
<dbReference type="PANTHER" id="PTHR11937">
    <property type="entry name" value="ACTIN"/>
    <property type="match status" value="1"/>
</dbReference>
<dbReference type="Pfam" id="PF00022">
    <property type="entry name" value="Actin"/>
    <property type="match status" value="1"/>
</dbReference>
<dbReference type="PRINTS" id="PR00190">
    <property type="entry name" value="ACTIN"/>
</dbReference>
<dbReference type="SMART" id="SM00268">
    <property type="entry name" value="ACTIN"/>
    <property type="match status" value="1"/>
</dbReference>
<dbReference type="SUPFAM" id="SSF53067">
    <property type="entry name" value="Actin-like ATPase domain"/>
    <property type="match status" value="2"/>
</dbReference>
<dbReference type="PROSITE" id="PS00432">
    <property type="entry name" value="ACTINS_2"/>
    <property type="match status" value="1"/>
</dbReference>
<comment type="function">
    <text evidence="1 2">Involved in transcriptional activation and repression of select genes by chromatin remodeling (alteration of DNA-nucleosome topology). Component of SWI/SNF chromatin remodeling complexes that carry out key enzymatic activities, changing chromatin structure by altering DNA-histone contacts within a nucleosome in an ATP-dependent manner. Belongs to the neuron-specific chromatin remodeling complex (nBAF complex), as such plays a role in remodeling mononucleosomes in an ATP-dependent fashion, and is required for postmitotic neural development and dendritic outgrowth. During neural development a switch from a stem/progenitor to a postmitotic chromatin remodeling mechanism occurs as neurons exit the cell cycle and become committed to their adult state. The transition from proliferating neural stem/progenitor cells to postmitotic neurons requires a switch in subunit composition of the npBAF and nBAF complexes. As neural progenitors exit mitosis and differentiate into neurons, npBAF complexes which contain ACTL6A/BAF53A and PHF10/BAF45A, are exchanged for homologous alternative ACTL6B/BAF53B and DPF1/BAF45B or DPF3/BAF45C subunits in neuron-specific complexes (nBAF). The npBAF complex is essential for the self-renewal/proliferative capacity of the multipotent neural stem cells. The nBAF complex along with CREST plays a role regulating the activity of genes essential for dendrite growth. ACTL6B/BAF53B is not essential for assembly of the nBAF complex but is required for targeting the complex and CREST to the promoter of genes essential for dendritic growth. Essential for neuronal maturation and dendrite development (By similarity).</text>
</comment>
<comment type="subunit">
    <text evidence="1 2">Component of the multiprotein chromatin-remodeling complexes SWI/SNF: SWI/SNF-A (BAF), SWI/SNF-B (PBAF) and related complexes. The canonical complex contains a catalytic subunit (either SMARCA4/BRG1/BAF190A or SMARCA2/BRM/BAF190B) and at least SMARCE1, ACTL6A/BAF53, SMARCC1/BAF155, SMARCC2/BAF170, and SMARCB1/SNF5/BAF47. Other subunits specific to each of the complexes may also be present permitting several possible combinations developmentally and tissue specific (By similarity). Component of the BAF complex, which includes at least actin (ACTB), ARID1A/BAF250A, ARID1B/BAF250B, SMARCA2/BRM, SMARCA4/BRG1/BAF190A, ACTL6A/BAF53, ACTL6B/BAF53B, SMARCE1/BAF57, SMARCC1/BAF155, SMARCC2/BAF170, SMARCB1/SNF5/INI1, and one or more SMARCD1/BAF60A, SMARCD2/BAF60B, or SMARCD3/BAF60C (By similarity). Component of neuron-specific chromatin remodeling complex (nBAF complex) composed of at least, ARID1A/BAF250A or ARID1B/BAF250B, SMARCD1/BAF60A or SMARCD2/BAF60B or SMARCD3/BAF60C, SMARCA2/BRM/BAF190B, SMARCA4/BRG1/BAF190A, SMARCB1/BAF47, SMARCC1/BAF155, SMARCE1/BAF57, SMARCC2/BAF170, DPF1/BAF45B, DPF3/BAF45C, ACTL6B/BAF53B and actin (ACTB). Note that the nBAF complex is polymorphic in regard to the ATPase, SMARCA2 and SMARCA4 occupying mutually exclusive positions (By similarity). May be a component of the SWI/SNF-B (PBAF) chromatin remodeling complex, at least composed of SMARCA4/BRG1, SMARCB1/BAF47/SNF5, ACTL6A/BAF53A or ACTL6B/BAF53B, SMARCE1/BAF57, SMARCD1/BAF60A, SMARCD2/BAF60B, perhaps SMARCD3/BAF60C, SMARCC1/BAF155, SMARCC2/BAF170, PBRM1/BAF180, ARID2/BAF200 and actin (By similarity).</text>
</comment>
<comment type="subcellular location">
    <subcellularLocation>
        <location evidence="4">Nucleus</location>
    </subcellularLocation>
</comment>
<comment type="tissue specificity">
    <text evidence="4">Expressed in hippocampus, exclusively in neurons, but not in glial cells.</text>
</comment>
<comment type="similarity">
    <text evidence="3">Belongs to the actin family.</text>
</comment>
<reference evidence="5" key="1">
    <citation type="submission" date="2005-07" db="EMBL/GenBank/DDBJ databases">
        <authorList>
            <person name="Mural R.J."/>
            <person name="Adams M.D."/>
            <person name="Myers E.W."/>
            <person name="Smith H.O."/>
            <person name="Venter J.C."/>
        </authorList>
    </citation>
    <scope>NUCLEOTIDE SEQUENCE [LARGE SCALE GENOMIC DNA]</scope>
</reference>
<reference key="2">
    <citation type="journal article" date="2002" name="Genes Dev.">
        <title>Identification of a polymorphic, neuron-specific chromatin remodeling complex.</title>
        <authorList>
            <person name="Olave I."/>
            <person name="Wang W."/>
            <person name="Xue Y."/>
            <person name="Kuo A."/>
            <person name="Crabtree G.R."/>
        </authorList>
    </citation>
    <scope>SUBCELLULAR LOCATION</scope>
    <scope>TISSUE SPECIFICITY</scope>
</reference>
<reference evidence="5" key="3">
    <citation type="submission" date="2008-12" db="UniProtKB">
        <authorList>
            <person name="Maurya D.K."/>
            <person name="Bhargava P."/>
        </authorList>
    </citation>
    <scope>IDENTIFICATION BY MASS SPECTROMETRY</scope>
</reference>